<proteinExistence type="inferred from homology"/>
<evidence type="ECO:0000255" key="1">
    <source>
        <dbReference type="HAMAP-Rule" id="MF_04066"/>
    </source>
</evidence>
<reference key="1">
    <citation type="journal article" date="1988" name="Virology">
        <title>Influenza B virus evolution: co-circulating lineages and comparison of evolutionary pattern with those of influenza A and C viruses.</title>
        <authorList>
            <person name="Yamashita M."/>
            <person name="Krystal M."/>
            <person name="Fitch W.M."/>
            <person name="Palese P."/>
        </authorList>
    </citation>
    <scope>NUCLEOTIDE SEQUENCE [GENOMIC RNA]</scope>
</reference>
<reference key="2">
    <citation type="journal article" date="2003" name="Virology">
        <title>Intracellular warfare between human influenza viruses and human cells: the roles of the viral NS1 protein.</title>
        <authorList>
            <person name="Krug R.M."/>
            <person name="Yuan W."/>
            <person name="Noah D.L."/>
            <person name="Latham A.G."/>
        </authorList>
    </citation>
    <scope>REVIEW</scope>
</reference>
<keyword id="KW-0025">Alternative splicing</keyword>
<keyword id="KW-1035">Host cytoplasm</keyword>
<keyword id="KW-1048">Host nucleus</keyword>
<keyword id="KW-0945">Host-virus interaction</keyword>
<keyword id="KW-1090">Inhibition of host innate immune response by virus</keyword>
<keyword id="KW-1114">Inhibition of host interferon signaling pathway by virus</keyword>
<keyword id="KW-1095">Inhibition of host ISG15 by virus</keyword>
<keyword id="KW-1102">Inhibition of host PKR by virus</keyword>
<keyword id="KW-0922">Interferon antiviral system evasion</keyword>
<keyword id="KW-0694">RNA-binding</keyword>
<keyword id="KW-0899">Viral immunoevasion</keyword>
<dbReference type="EMBL" id="M19788">
    <property type="protein sequence ID" value="AAA43724.1"/>
    <property type="molecule type" value="Genomic_RNA"/>
</dbReference>
<dbReference type="SMR" id="P12596"/>
<dbReference type="GO" id="GO:0030430">
    <property type="term" value="C:host cell cytoplasm"/>
    <property type="evidence" value="ECO:0007669"/>
    <property type="project" value="UniProtKB-SubCell"/>
</dbReference>
<dbReference type="GO" id="GO:0042025">
    <property type="term" value="C:host cell nucleus"/>
    <property type="evidence" value="ECO:0007669"/>
    <property type="project" value="UniProtKB-SubCell"/>
</dbReference>
<dbReference type="GO" id="GO:0030291">
    <property type="term" value="F:protein serine/threonine kinase inhibitor activity"/>
    <property type="evidence" value="ECO:0007669"/>
    <property type="project" value="UniProtKB-KW"/>
</dbReference>
<dbReference type="GO" id="GO:0003723">
    <property type="term" value="F:RNA binding"/>
    <property type="evidence" value="ECO:0007669"/>
    <property type="project" value="UniProtKB-KW"/>
</dbReference>
<dbReference type="GO" id="GO:0039579">
    <property type="term" value="P:symbiont-mediated suppression of host ISG15-protein conjugation"/>
    <property type="evidence" value="ECO:0007669"/>
    <property type="project" value="UniProtKB-KW"/>
</dbReference>
<dbReference type="GO" id="GO:0039580">
    <property type="term" value="P:symbiont-mediated suppression of host PKR/eIFalpha signaling"/>
    <property type="evidence" value="ECO:0007669"/>
    <property type="project" value="UniProtKB-KW"/>
</dbReference>
<dbReference type="GO" id="GO:0039502">
    <property type="term" value="P:symbiont-mediated suppression of host type I interferon-mediated signaling pathway"/>
    <property type="evidence" value="ECO:0007669"/>
    <property type="project" value="UniProtKB-KW"/>
</dbReference>
<dbReference type="Gene3D" id="1.10.287.10">
    <property type="entry name" value="S15/NS1, RNA-binding"/>
    <property type="match status" value="1"/>
</dbReference>
<dbReference type="HAMAP" id="MF_04066">
    <property type="entry name" value="INFV_NS1"/>
    <property type="match status" value="1"/>
</dbReference>
<dbReference type="InterPro" id="IPR004208">
    <property type="entry name" value="NS1"/>
</dbReference>
<dbReference type="InterPro" id="IPR009068">
    <property type="entry name" value="uS15_NS1_RNA-bd_sf"/>
</dbReference>
<dbReference type="Pfam" id="PF02942">
    <property type="entry name" value="Flu_B_NS1"/>
    <property type="match status" value="1"/>
</dbReference>
<dbReference type="PIRSF" id="PIRSF003938">
    <property type="entry name" value="Flu_B_NS1"/>
    <property type="match status" value="1"/>
</dbReference>
<dbReference type="SUPFAM" id="SSF47060">
    <property type="entry name" value="S15/NS1 RNA-binding domain"/>
    <property type="match status" value="1"/>
</dbReference>
<accession>P12596</accession>
<comment type="function">
    <text evidence="1">Binds and inhibits the conjugation of the ubiquitin-like G1P2/ISG15 protein to its target proteins. Since G1P2/ISG15 is an early antiviral protein, NS1 may inhibit the host antiviral response. Prevents EIF2AK2/PKR activation, either by binding double strand RNA or by interacting directly with EIF2AK2/PKR. Also binds poly(A) and U6 snRNA.</text>
</comment>
<comment type="subunit">
    <text evidence="1">Homodimer. Interacts with and inhibits human G1P2 conjugation by UBE1L.</text>
</comment>
<comment type="subcellular location">
    <subcellularLocation>
        <location evidence="1">Host cytoplasm</location>
    </subcellularLocation>
    <subcellularLocation>
        <location evidence="1">Host nucleus</location>
    </subcellularLocation>
</comment>
<comment type="alternative products">
    <event type="alternative splicing"/>
    <isoform>
        <id>P12596-1</id>
        <name>NS1</name>
        <sequence type="displayed"/>
    </isoform>
    <isoform>
        <id>P12596-2</id>
        <name>NEP</name>
        <name>NS2</name>
        <sequence type="not described"/>
    </isoform>
</comment>
<comment type="similarity">
    <text evidence="1">Belongs to the influenza B viruses NS1 family.</text>
</comment>
<gene>
    <name evidence="1" type="primary">NS</name>
</gene>
<organism>
    <name type="scientific">Influenza B virus (strain B/ID/1986)</name>
    <dbReference type="NCBI Taxonomy" id="11534"/>
    <lineage>
        <taxon>Viruses</taxon>
        <taxon>Riboviria</taxon>
        <taxon>Orthornavirae</taxon>
        <taxon>Negarnaviricota</taxon>
        <taxon>Polyploviricotina</taxon>
        <taxon>Insthoviricetes</taxon>
        <taxon>Articulavirales</taxon>
        <taxon>Orthomyxoviridae</taxon>
        <taxon>Betainfluenzavirus</taxon>
        <taxon>Betainfluenzavirus influenzae</taxon>
        <taxon>Influenza B virus</taxon>
    </lineage>
</organism>
<organismHost>
    <name type="scientific">Homo sapiens</name>
    <name type="common">Human</name>
    <dbReference type="NCBI Taxonomy" id="9606"/>
</organismHost>
<protein>
    <recommendedName>
        <fullName evidence="1">Non-structural protein 1</fullName>
        <shortName evidence="1">NS1</shortName>
    </recommendedName>
    <alternativeName>
        <fullName evidence="1">NS1A</fullName>
    </alternativeName>
</protein>
<feature type="chain" id="PRO_0000078965" description="Non-structural protein 1">
    <location>
        <begin position="1"/>
        <end position="281"/>
    </location>
</feature>
<feature type="region of interest" description="G1P2-binding">
    <location>
        <begin position="1"/>
        <end position="103"/>
    </location>
</feature>
<feature type="region of interest" description="RNA-binding and homodimerization" evidence="1">
    <location>
        <begin position="1"/>
        <end position="93"/>
    </location>
</feature>
<feature type="short sequence motif" description="Nuclear localization signal" evidence="1">
    <location>
        <begin position="50"/>
        <end position="55"/>
    </location>
</feature>
<sequence length="281" mass="31958">MADNMTTTQIEVGPGATNATINFEAGILECYERLSWQRALDYPGQDRLNRLKRKLESRIKTHNKSEPESKRMSLEERKAIGIKMMKVLLFMNPSAGVEGFEPDCMKNPSNSNCPNCNWADYPPTPGKYLDDIEEEPKNVDDPTEIVLRDMNNKDARQKIKEEVNTQKEGKFRLTIKRDIRNVLSLRVLVNGTFLKHPNGYKTLSTLHRLNAYDQSGRLVAKLVATDDLTVEDEEDGHRILNSLFERFNEGHSKPIRAAETAVGVLSQFGQEHRLSPEEGDN</sequence>
<name>NS1_INBID</name>